<sequence>MAKVNLEQIEHAVRLILEAIGDDPNREGVLDTPKRVAKMYAEVFSGMHEDPKEHLHKVFGEDHEELVLVKDIPFYSMCEHHLVPFYGVAHVAYIPQGGKVTGLSKLARTVDTIARRPQLQERITSTVANSIMEVLEPHGVMVVVEAEHMCMTMRGVKKPGAKTVTTAVRGVLENDAAARSEILSFIKTK</sequence>
<comment type="catalytic activity">
    <reaction evidence="1">
        <text>GTP + H2O = 7,8-dihydroneopterin 3'-triphosphate + formate + H(+)</text>
        <dbReference type="Rhea" id="RHEA:17473"/>
        <dbReference type="ChEBI" id="CHEBI:15377"/>
        <dbReference type="ChEBI" id="CHEBI:15378"/>
        <dbReference type="ChEBI" id="CHEBI:15740"/>
        <dbReference type="ChEBI" id="CHEBI:37565"/>
        <dbReference type="ChEBI" id="CHEBI:58462"/>
        <dbReference type="EC" id="3.5.4.16"/>
    </reaction>
</comment>
<comment type="pathway">
    <text evidence="1">Cofactor biosynthesis; 7,8-dihydroneopterin triphosphate biosynthesis; 7,8-dihydroneopterin triphosphate from GTP: step 1/1.</text>
</comment>
<comment type="subunit">
    <text evidence="1">Homomer.</text>
</comment>
<comment type="similarity">
    <text evidence="1">Belongs to the GTP cyclohydrolase I family.</text>
</comment>
<reference key="1">
    <citation type="journal article" date="2009" name="J. Bacteriol.">
        <title>Complete genome sequence of the extremophilic Bacillus cereus strain Q1 with industrial applications.</title>
        <authorList>
            <person name="Xiong Z."/>
            <person name="Jiang Y."/>
            <person name="Qi D."/>
            <person name="Lu H."/>
            <person name="Yang F."/>
            <person name="Yang J."/>
            <person name="Chen L."/>
            <person name="Sun L."/>
            <person name="Xu X."/>
            <person name="Xue Y."/>
            <person name="Zhu Y."/>
            <person name="Jin Q."/>
        </authorList>
    </citation>
    <scope>NUCLEOTIDE SEQUENCE [LARGE SCALE GENOMIC DNA]</scope>
    <source>
        <strain>Q1</strain>
    </source>
</reference>
<evidence type="ECO:0000255" key="1">
    <source>
        <dbReference type="HAMAP-Rule" id="MF_00223"/>
    </source>
</evidence>
<keyword id="KW-0342">GTP-binding</keyword>
<keyword id="KW-0378">Hydrolase</keyword>
<keyword id="KW-0479">Metal-binding</keyword>
<keyword id="KW-0547">Nucleotide-binding</keyword>
<keyword id="KW-0554">One-carbon metabolism</keyword>
<keyword id="KW-0862">Zinc</keyword>
<organism>
    <name type="scientific">Bacillus cereus (strain Q1)</name>
    <dbReference type="NCBI Taxonomy" id="361100"/>
    <lineage>
        <taxon>Bacteria</taxon>
        <taxon>Bacillati</taxon>
        <taxon>Bacillota</taxon>
        <taxon>Bacilli</taxon>
        <taxon>Bacillales</taxon>
        <taxon>Bacillaceae</taxon>
        <taxon>Bacillus</taxon>
        <taxon>Bacillus cereus group</taxon>
    </lineage>
</organism>
<protein>
    <recommendedName>
        <fullName evidence="1">GTP cyclohydrolase 1</fullName>
        <ecNumber evidence="1">3.5.4.16</ecNumber>
    </recommendedName>
    <alternativeName>
        <fullName evidence="1">GTP cyclohydrolase I</fullName>
        <shortName evidence="1">GTP-CH-I</shortName>
    </alternativeName>
</protein>
<gene>
    <name evidence="1" type="primary">folE</name>
    <name type="ordered locus">BCQ_1580</name>
</gene>
<proteinExistence type="inferred from homology"/>
<dbReference type="EC" id="3.5.4.16" evidence="1"/>
<dbReference type="EMBL" id="CP000227">
    <property type="protein sequence ID" value="ACM12008.1"/>
    <property type="molecule type" value="Genomic_DNA"/>
</dbReference>
<dbReference type="SMR" id="B9IVN3"/>
<dbReference type="KEGG" id="bcq:BCQ_1580"/>
<dbReference type="HOGENOM" id="CLU_049768_3_3_9"/>
<dbReference type="UniPathway" id="UPA00848">
    <property type="reaction ID" value="UER00151"/>
</dbReference>
<dbReference type="Proteomes" id="UP000000441">
    <property type="component" value="Chromosome"/>
</dbReference>
<dbReference type="GO" id="GO:0005737">
    <property type="term" value="C:cytoplasm"/>
    <property type="evidence" value="ECO:0007669"/>
    <property type="project" value="TreeGrafter"/>
</dbReference>
<dbReference type="GO" id="GO:0005525">
    <property type="term" value="F:GTP binding"/>
    <property type="evidence" value="ECO:0007669"/>
    <property type="project" value="UniProtKB-KW"/>
</dbReference>
<dbReference type="GO" id="GO:0003934">
    <property type="term" value="F:GTP cyclohydrolase I activity"/>
    <property type="evidence" value="ECO:0007669"/>
    <property type="project" value="UniProtKB-UniRule"/>
</dbReference>
<dbReference type="GO" id="GO:0008270">
    <property type="term" value="F:zinc ion binding"/>
    <property type="evidence" value="ECO:0007669"/>
    <property type="project" value="UniProtKB-UniRule"/>
</dbReference>
<dbReference type="GO" id="GO:0006730">
    <property type="term" value="P:one-carbon metabolic process"/>
    <property type="evidence" value="ECO:0007669"/>
    <property type="project" value="UniProtKB-UniRule"/>
</dbReference>
<dbReference type="GO" id="GO:0006729">
    <property type="term" value="P:tetrahydrobiopterin biosynthetic process"/>
    <property type="evidence" value="ECO:0007669"/>
    <property type="project" value="TreeGrafter"/>
</dbReference>
<dbReference type="GO" id="GO:0046654">
    <property type="term" value="P:tetrahydrofolate biosynthetic process"/>
    <property type="evidence" value="ECO:0007669"/>
    <property type="project" value="UniProtKB-UniRule"/>
</dbReference>
<dbReference type="CDD" id="cd00642">
    <property type="entry name" value="GTP_cyclohydro1"/>
    <property type="match status" value="1"/>
</dbReference>
<dbReference type="FunFam" id="1.10.286.10:FF:000001">
    <property type="entry name" value="GTP cyclohydrolase 1"/>
    <property type="match status" value="1"/>
</dbReference>
<dbReference type="FunFam" id="3.30.1130.10:FF:000001">
    <property type="entry name" value="GTP cyclohydrolase 1"/>
    <property type="match status" value="1"/>
</dbReference>
<dbReference type="Gene3D" id="1.10.286.10">
    <property type="match status" value="1"/>
</dbReference>
<dbReference type="Gene3D" id="3.30.1130.10">
    <property type="match status" value="1"/>
</dbReference>
<dbReference type="HAMAP" id="MF_00223">
    <property type="entry name" value="FolE"/>
    <property type="match status" value="1"/>
</dbReference>
<dbReference type="InterPro" id="IPR043133">
    <property type="entry name" value="GTP-CH-I_C/QueF"/>
</dbReference>
<dbReference type="InterPro" id="IPR043134">
    <property type="entry name" value="GTP-CH-I_N"/>
</dbReference>
<dbReference type="InterPro" id="IPR001474">
    <property type="entry name" value="GTP_CycHdrlase_I"/>
</dbReference>
<dbReference type="InterPro" id="IPR018234">
    <property type="entry name" value="GTP_CycHdrlase_I_CS"/>
</dbReference>
<dbReference type="InterPro" id="IPR020602">
    <property type="entry name" value="GTP_CycHdrlase_I_dom"/>
</dbReference>
<dbReference type="NCBIfam" id="TIGR00063">
    <property type="entry name" value="folE"/>
    <property type="match status" value="1"/>
</dbReference>
<dbReference type="NCBIfam" id="NF006825">
    <property type="entry name" value="PRK09347.1-2"/>
    <property type="match status" value="1"/>
</dbReference>
<dbReference type="NCBIfam" id="NF006826">
    <property type="entry name" value="PRK09347.1-3"/>
    <property type="match status" value="1"/>
</dbReference>
<dbReference type="PANTHER" id="PTHR11109:SF7">
    <property type="entry name" value="GTP CYCLOHYDROLASE 1"/>
    <property type="match status" value="1"/>
</dbReference>
<dbReference type="PANTHER" id="PTHR11109">
    <property type="entry name" value="GTP CYCLOHYDROLASE I"/>
    <property type="match status" value="1"/>
</dbReference>
<dbReference type="Pfam" id="PF01227">
    <property type="entry name" value="GTP_cyclohydroI"/>
    <property type="match status" value="1"/>
</dbReference>
<dbReference type="SUPFAM" id="SSF55620">
    <property type="entry name" value="Tetrahydrobiopterin biosynthesis enzymes-like"/>
    <property type="match status" value="1"/>
</dbReference>
<dbReference type="PROSITE" id="PS00859">
    <property type="entry name" value="GTP_CYCLOHYDROL_1_1"/>
    <property type="match status" value="1"/>
</dbReference>
<dbReference type="PROSITE" id="PS00860">
    <property type="entry name" value="GTP_CYCLOHYDROL_1_2"/>
    <property type="match status" value="1"/>
</dbReference>
<name>GCH1_BACCQ</name>
<accession>B9IVN3</accession>
<feature type="chain" id="PRO_1000124909" description="GTP cyclohydrolase 1">
    <location>
        <begin position="1"/>
        <end position="189"/>
    </location>
</feature>
<feature type="binding site" evidence="1">
    <location>
        <position position="78"/>
    </location>
    <ligand>
        <name>Zn(2+)</name>
        <dbReference type="ChEBI" id="CHEBI:29105"/>
    </ligand>
</feature>
<feature type="binding site" evidence="1">
    <location>
        <position position="81"/>
    </location>
    <ligand>
        <name>Zn(2+)</name>
        <dbReference type="ChEBI" id="CHEBI:29105"/>
    </ligand>
</feature>
<feature type="binding site" evidence="1">
    <location>
        <position position="150"/>
    </location>
    <ligand>
        <name>Zn(2+)</name>
        <dbReference type="ChEBI" id="CHEBI:29105"/>
    </ligand>
</feature>